<feature type="chain" id="PRO_1000051111" description="Small ribosomal subunit protein uS19">
    <location>
        <begin position="1"/>
        <end position="92"/>
    </location>
</feature>
<comment type="function">
    <text evidence="1">Protein S19 forms a complex with S13 that binds strongly to the 16S ribosomal RNA.</text>
</comment>
<comment type="similarity">
    <text evidence="1">Belongs to the universal ribosomal protein uS19 family.</text>
</comment>
<sequence>MARSTWKGPFVDGYLLKKAEKSRESGKNEVIKIWSRRSTILPQFVGLTFGVYNGKKHVPVNVTEEMIGQKFGEYSPTRTYYGHAADKKAKRK</sequence>
<accession>A3PGL5</accession>
<gene>
    <name evidence="1" type="primary">rpsS</name>
    <name type="ordered locus">Rsph17029_0365</name>
</gene>
<reference key="1">
    <citation type="submission" date="2007-02" db="EMBL/GenBank/DDBJ databases">
        <title>Complete sequence of chromosome 1 of Rhodobacter sphaeroides ATCC 17029.</title>
        <authorList>
            <person name="Copeland A."/>
            <person name="Lucas S."/>
            <person name="Lapidus A."/>
            <person name="Barry K."/>
            <person name="Detter J.C."/>
            <person name="Glavina del Rio T."/>
            <person name="Hammon N."/>
            <person name="Israni S."/>
            <person name="Dalin E."/>
            <person name="Tice H."/>
            <person name="Pitluck S."/>
            <person name="Kiss H."/>
            <person name="Brettin T."/>
            <person name="Bruce D."/>
            <person name="Han C."/>
            <person name="Tapia R."/>
            <person name="Gilna P."/>
            <person name="Schmutz J."/>
            <person name="Larimer F."/>
            <person name="Land M."/>
            <person name="Hauser L."/>
            <person name="Kyrpides N."/>
            <person name="Mikhailova N."/>
            <person name="Richardson P."/>
            <person name="Mackenzie C."/>
            <person name="Choudhary M."/>
            <person name="Donohue T.J."/>
            <person name="Kaplan S."/>
        </authorList>
    </citation>
    <scope>NUCLEOTIDE SEQUENCE [LARGE SCALE GENOMIC DNA]</scope>
    <source>
        <strain>ATCC 17029 / ATH 2.4.9</strain>
    </source>
</reference>
<evidence type="ECO:0000255" key="1">
    <source>
        <dbReference type="HAMAP-Rule" id="MF_00531"/>
    </source>
</evidence>
<evidence type="ECO:0000305" key="2"/>
<organism>
    <name type="scientific">Cereibacter sphaeroides (strain ATCC 17029 / ATH 2.4.9)</name>
    <name type="common">Rhodobacter sphaeroides</name>
    <dbReference type="NCBI Taxonomy" id="349101"/>
    <lineage>
        <taxon>Bacteria</taxon>
        <taxon>Pseudomonadati</taxon>
        <taxon>Pseudomonadota</taxon>
        <taxon>Alphaproteobacteria</taxon>
        <taxon>Rhodobacterales</taxon>
        <taxon>Paracoccaceae</taxon>
        <taxon>Cereibacter</taxon>
    </lineage>
</organism>
<proteinExistence type="inferred from homology"/>
<dbReference type="EMBL" id="CP000577">
    <property type="protein sequence ID" value="ABN75481.1"/>
    <property type="molecule type" value="Genomic_DNA"/>
</dbReference>
<dbReference type="RefSeq" id="WP_002722496.1">
    <property type="nucleotide sequence ID" value="NC_009049.1"/>
</dbReference>
<dbReference type="SMR" id="A3PGL5"/>
<dbReference type="GeneID" id="67445504"/>
<dbReference type="KEGG" id="rsh:Rsph17029_0365"/>
<dbReference type="HOGENOM" id="CLU_144911_0_1_5"/>
<dbReference type="GO" id="GO:0005737">
    <property type="term" value="C:cytoplasm"/>
    <property type="evidence" value="ECO:0007669"/>
    <property type="project" value="UniProtKB-ARBA"/>
</dbReference>
<dbReference type="GO" id="GO:0015935">
    <property type="term" value="C:small ribosomal subunit"/>
    <property type="evidence" value="ECO:0007669"/>
    <property type="project" value="InterPro"/>
</dbReference>
<dbReference type="GO" id="GO:0019843">
    <property type="term" value="F:rRNA binding"/>
    <property type="evidence" value="ECO:0007669"/>
    <property type="project" value="UniProtKB-UniRule"/>
</dbReference>
<dbReference type="GO" id="GO:0003735">
    <property type="term" value="F:structural constituent of ribosome"/>
    <property type="evidence" value="ECO:0007669"/>
    <property type="project" value="InterPro"/>
</dbReference>
<dbReference type="GO" id="GO:0000028">
    <property type="term" value="P:ribosomal small subunit assembly"/>
    <property type="evidence" value="ECO:0007669"/>
    <property type="project" value="TreeGrafter"/>
</dbReference>
<dbReference type="GO" id="GO:0006412">
    <property type="term" value="P:translation"/>
    <property type="evidence" value="ECO:0007669"/>
    <property type="project" value="UniProtKB-UniRule"/>
</dbReference>
<dbReference type="FunFam" id="3.30.860.10:FF:000001">
    <property type="entry name" value="30S ribosomal protein S19"/>
    <property type="match status" value="1"/>
</dbReference>
<dbReference type="Gene3D" id="3.30.860.10">
    <property type="entry name" value="30s Ribosomal Protein S19, Chain A"/>
    <property type="match status" value="1"/>
</dbReference>
<dbReference type="HAMAP" id="MF_00531">
    <property type="entry name" value="Ribosomal_uS19"/>
    <property type="match status" value="1"/>
</dbReference>
<dbReference type="InterPro" id="IPR002222">
    <property type="entry name" value="Ribosomal_uS19"/>
</dbReference>
<dbReference type="InterPro" id="IPR005732">
    <property type="entry name" value="Ribosomal_uS19_bac-type"/>
</dbReference>
<dbReference type="InterPro" id="IPR020934">
    <property type="entry name" value="Ribosomal_uS19_CS"/>
</dbReference>
<dbReference type="InterPro" id="IPR023575">
    <property type="entry name" value="Ribosomal_uS19_SF"/>
</dbReference>
<dbReference type="NCBIfam" id="TIGR01050">
    <property type="entry name" value="rpsS_bact"/>
    <property type="match status" value="1"/>
</dbReference>
<dbReference type="PANTHER" id="PTHR11880">
    <property type="entry name" value="RIBOSOMAL PROTEIN S19P FAMILY MEMBER"/>
    <property type="match status" value="1"/>
</dbReference>
<dbReference type="PANTHER" id="PTHR11880:SF8">
    <property type="entry name" value="SMALL RIBOSOMAL SUBUNIT PROTEIN US19M"/>
    <property type="match status" value="1"/>
</dbReference>
<dbReference type="Pfam" id="PF00203">
    <property type="entry name" value="Ribosomal_S19"/>
    <property type="match status" value="1"/>
</dbReference>
<dbReference type="PIRSF" id="PIRSF002144">
    <property type="entry name" value="Ribosomal_S19"/>
    <property type="match status" value="1"/>
</dbReference>
<dbReference type="PRINTS" id="PR00975">
    <property type="entry name" value="RIBOSOMALS19"/>
</dbReference>
<dbReference type="SUPFAM" id="SSF54570">
    <property type="entry name" value="Ribosomal protein S19"/>
    <property type="match status" value="1"/>
</dbReference>
<dbReference type="PROSITE" id="PS00323">
    <property type="entry name" value="RIBOSOMAL_S19"/>
    <property type="match status" value="1"/>
</dbReference>
<name>RS19_CERS1</name>
<keyword id="KW-0687">Ribonucleoprotein</keyword>
<keyword id="KW-0689">Ribosomal protein</keyword>
<keyword id="KW-0694">RNA-binding</keyword>
<keyword id="KW-0699">rRNA-binding</keyword>
<protein>
    <recommendedName>
        <fullName evidence="1">Small ribosomal subunit protein uS19</fullName>
    </recommendedName>
    <alternativeName>
        <fullName evidence="2">30S ribosomal protein S19</fullName>
    </alternativeName>
</protein>